<dbReference type="EMBL" id="AE006914">
    <property type="protein sequence ID" value="AAL02683.1"/>
    <property type="molecule type" value="Genomic_DNA"/>
</dbReference>
<dbReference type="PIR" id="A97718">
    <property type="entry name" value="A97718"/>
</dbReference>
<dbReference type="RefSeq" id="WP_010976822.1">
    <property type="nucleotide sequence ID" value="NC_003103.1"/>
</dbReference>
<dbReference type="GeneID" id="928048"/>
<dbReference type="KEGG" id="rco:RC0145"/>
<dbReference type="PATRIC" id="fig|272944.4.peg.169"/>
<dbReference type="HOGENOM" id="CLU_327573_0_0_5"/>
<dbReference type="Proteomes" id="UP000000816">
    <property type="component" value="Chromosome"/>
</dbReference>
<dbReference type="GO" id="GO:0005886">
    <property type="term" value="C:plasma membrane"/>
    <property type="evidence" value="ECO:0007669"/>
    <property type="project" value="UniProtKB-SubCell"/>
</dbReference>
<dbReference type="GO" id="GO:0030255">
    <property type="term" value="P:protein secretion by the type IV secretion system"/>
    <property type="evidence" value="ECO:0007669"/>
    <property type="project" value="InterPro"/>
</dbReference>
<dbReference type="InterPro" id="IPR007688">
    <property type="entry name" value="Conjugal_tfr_TrbL/VirB6"/>
</dbReference>
<dbReference type="Pfam" id="PF04610">
    <property type="entry name" value="TrbL"/>
    <property type="match status" value="1"/>
</dbReference>
<feature type="signal peptide" evidence="1">
    <location>
        <begin position="1"/>
        <end position="20"/>
    </location>
</feature>
<feature type="chain" id="PRO_0000269223" description="Uncharacterized protein RC0145">
    <location>
        <begin position="21"/>
        <end position="891"/>
    </location>
</feature>
<feature type="transmembrane region" description="Helical" evidence="1">
    <location>
        <begin position="525"/>
        <end position="545"/>
    </location>
</feature>
<feature type="transmembrane region" description="Helical" evidence="1">
    <location>
        <begin position="568"/>
        <end position="588"/>
    </location>
</feature>
<feature type="transmembrane region" description="Helical" evidence="1">
    <location>
        <begin position="614"/>
        <end position="634"/>
    </location>
</feature>
<feature type="transmembrane region" description="Helical" evidence="1">
    <location>
        <begin position="652"/>
        <end position="672"/>
    </location>
</feature>
<feature type="transmembrane region" description="Helical" evidence="1">
    <location>
        <begin position="685"/>
        <end position="705"/>
    </location>
</feature>
<feature type="transmembrane region" description="Helical" evidence="1">
    <location>
        <begin position="776"/>
        <end position="796"/>
    </location>
</feature>
<accession>Q92JC2</accession>
<comment type="subcellular location">
    <subcellularLocation>
        <location evidence="2">Cell membrane</location>
        <topology evidence="2">Multi-pass membrane protein</topology>
    </subcellularLocation>
</comment>
<comment type="similarity">
    <text evidence="2">Belongs to the TrbL/VirB6 family.</text>
</comment>
<organism>
    <name type="scientific">Rickettsia conorii (strain ATCC VR-613 / Malish 7)</name>
    <dbReference type="NCBI Taxonomy" id="272944"/>
    <lineage>
        <taxon>Bacteria</taxon>
        <taxon>Pseudomonadati</taxon>
        <taxon>Pseudomonadota</taxon>
        <taxon>Alphaproteobacteria</taxon>
        <taxon>Rickettsiales</taxon>
        <taxon>Rickettsiaceae</taxon>
        <taxon>Rickettsieae</taxon>
        <taxon>Rickettsia</taxon>
        <taxon>spotted fever group</taxon>
    </lineage>
</organism>
<protein>
    <recommendedName>
        <fullName>Uncharacterized protein RC0145</fullName>
    </recommendedName>
</protein>
<proteinExistence type="inferred from homology"/>
<evidence type="ECO:0000255" key="1"/>
<evidence type="ECO:0000305" key="2"/>
<sequence>MKILKSLVLLVLFMAMPAKADDAFSWMSTSFGGLKSLFGCLEVPEFTSFQEGNIGISLSTAGIWQSTGNTVQKGKLLKINWSTSGITLEPRKYLVLYRIDPRFSMPQVFIKTYNYSKLQFEALGFPRFVTDNNSETPGTIPPDKDLDALSFTKMSDFVKYFNYSNGNSRIEVKAGDVVNISLVGKDNFFSPNTLKLPNTVDNILTQELDSSIFAASALYTQSNLGDFDNRIIYSSAEQVCNMIDKERKSVCSGTGTATKYKNTDNGVIVGKPMITGAVQYFMGLIKACPANAGINTSPACYYDQGRGMIIKVGGQVIKGQDQSFVNSGSTQSSFIYYQATSGGIMDFTSDWQVSNMFSNSVLMNDWSRNFSNYASFVDYINKNDWSANFLYFGCYSMIVEIGNGANLINPDDQQNIKLEYLITSDGTLPDPSVRGMPVDYNFATDAPQDGYLWLRVVNPNSNIQGVVSVNYANYTGTTWFSDIIYNGAIKPITDQFRTFSQNFYIKLVKNSAVQNLAKTALTLYVTIFGLMFVTGALKLTAVEVITRICKIAIVAFLIREESWSFFNTYFFSAFTDGIDFFVTNVVGATSSRSNIFGFIDPIFDKYTNGRIWGLLFIELLQIHNGLAFIAIITIYSLITYFRAILEVIIGYVIAFIGVTVMISLAPFFIILMLFEKTKSLFDNWISTLLSYVVQPTILLIFFLLIDQVLSEQLLKVVVRACWDTLIPIKIGLDLTNLGIPIHFSFTLPFLPGIPFYVPDVPEISSSNILTNNANTFLVLFTTALLFYSYCLMSYSLVTFVNIVVGMLTNVTPARISGNYQERSDPVGAVMQDIDSVTKPIKKAAMAPARVFKDKIIDQNYKARKAEVGGEFTNKFLAERNDVKKEEGEKKE</sequence>
<gene>
    <name type="ordered locus">RC0145</name>
</gene>
<name>Y145_RICCN</name>
<keyword id="KW-1003">Cell membrane</keyword>
<keyword id="KW-0472">Membrane</keyword>
<keyword id="KW-0732">Signal</keyword>
<keyword id="KW-0812">Transmembrane</keyword>
<keyword id="KW-1133">Transmembrane helix</keyword>
<reference key="1">
    <citation type="journal article" date="2001" name="Science">
        <title>Mechanisms of evolution in Rickettsia conorii and R. prowazekii.</title>
        <authorList>
            <person name="Ogata H."/>
            <person name="Audic S."/>
            <person name="Renesto-Audiffren P."/>
            <person name="Fournier P.-E."/>
            <person name="Barbe V."/>
            <person name="Samson D."/>
            <person name="Roux V."/>
            <person name="Cossart P."/>
            <person name="Weissenbach J."/>
            <person name="Claverie J.-M."/>
            <person name="Raoult D."/>
        </authorList>
    </citation>
    <scope>NUCLEOTIDE SEQUENCE [LARGE SCALE GENOMIC DNA]</scope>
    <source>
        <strain>ATCC VR-613 / Malish 7</strain>
    </source>
</reference>